<proteinExistence type="inferred from homology"/>
<sequence>MKEERPIIALDFSSFEETKAFLDLFPAEEKLYVKIGMELYYAQGPDIVRYIKSLGHNVFLDLKLHDIPNTVRAAMAVLKELDIDMATVHAAGGVEMLKAAREGLGQGPTLIAVTQLTSTSEDQMRGDQNIQTSLLESVLHYSKGAAKAQLDGVVCSAQEVEAIKAVTPTGFTCLTPGIRPKGSNIGDQKRVMTPNQARRIGSDYIVVGRPITQAKDPVAAYQAIKAEWAG</sequence>
<name>PYRF_STRPG</name>
<organism>
    <name type="scientific">Streptococcus pyogenes serotype M5 (strain Manfredo)</name>
    <dbReference type="NCBI Taxonomy" id="160491"/>
    <lineage>
        <taxon>Bacteria</taxon>
        <taxon>Bacillati</taxon>
        <taxon>Bacillota</taxon>
        <taxon>Bacilli</taxon>
        <taxon>Lactobacillales</taxon>
        <taxon>Streptococcaceae</taxon>
        <taxon>Streptococcus</taxon>
    </lineage>
</organism>
<keyword id="KW-0210">Decarboxylase</keyword>
<keyword id="KW-0456">Lyase</keyword>
<keyword id="KW-0665">Pyrimidine biosynthesis</keyword>
<gene>
    <name evidence="1" type="primary">pyrF</name>
    <name type="ordered locus">SpyM51105</name>
</gene>
<comment type="function">
    <text evidence="1">Catalyzes the decarboxylation of orotidine 5'-monophosphate (OMP) to uridine 5'-monophosphate (UMP).</text>
</comment>
<comment type="catalytic activity">
    <reaction evidence="1">
        <text>orotidine 5'-phosphate + H(+) = UMP + CO2</text>
        <dbReference type="Rhea" id="RHEA:11596"/>
        <dbReference type="ChEBI" id="CHEBI:15378"/>
        <dbReference type="ChEBI" id="CHEBI:16526"/>
        <dbReference type="ChEBI" id="CHEBI:57538"/>
        <dbReference type="ChEBI" id="CHEBI:57865"/>
        <dbReference type="EC" id="4.1.1.23"/>
    </reaction>
</comment>
<comment type="pathway">
    <text evidence="1">Pyrimidine metabolism; UMP biosynthesis via de novo pathway; UMP from orotate: step 2/2.</text>
</comment>
<comment type="subunit">
    <text evidence="1">Homodimer.</text>
</comment>
<comment type="similarity">
    <text evidence="1">Belongs to the OMP decarboxylase family. Type 1 subfamily.</text>
</comment>
<reference key="1">
    <citation type="journal article" date="2007" name="J. Bacteriol.">
        <title>Complete genome of acute rheumatic fever-associated serotype M5 Streptococcus pyogenes strain Manfredo.</title>
        <authorList>
            <person name="Holden M.T.G."/>
            <person name="Scott A."/>
            <person name="Cherevach I."/>
            <person name="Chillingworth T."/>
            <person name="Churcher C."/>
            <person name="Cronin A."/>
            <person name="Dowd L."/>
            <person name="Feltwell T."/>
            <person name="Hamlin N."/>
            <person name="Holroyd S."/>
            <person name="Jagels K."/>
            <person name="Moule S."/>
            <person name="Mungall K."/>
            <person name="Quail M.A."/>
            <person name="Price C."/>
            <person name="Rabbinowitsch E."/>
            <person name="Sharp S."/>
            <person name="Skelton J."/>
            <person name="Whitehead S."/>
            <person name="Barrell B.G."/>
            <person name="Kehoe M."/>
            <person name="Parkhill J."/>
        </authorList>
    </citation>
    <scope>NUCLEOTIDE SEQUENCE [LARGE SCALE GENOMIC DNA]</scope>
    <source>
        <strain>Manfredo</strain>
    </source>
</reference>
<accession>A2RF05</accession>
<dbReference type="EC" id="4.1.1.23" evidence="1"/>
<dbReference type="EMBL" id="AM295007">
    <property type="protein sequence ID" value="CAM30431.1"/>
    <property type="molecule type" value="Genomic_DNA"/>
</dbReference>
<dbReference type="RefSeq" id="WP_011184421.1">
    <property type="nucleotide sequence ID" value="NC_009332.1"/>
</dbReference>
<dbReference type="SMR" id="A2RF05"/>
<dbReference type="KEGG" id="spf:SpyM51105"/>
<dbReference type="HOGENOM" id="CLU_067069_1_1_9"/>
<dbReference type="UniPathway" id="UPA00070">
    <property type="reaction ID" value="UER00120"/>
</dbReference>
<dbReference type="GO" id="GO:0005829">
    <property type="term" value="C:cytosol"/>
    <property type="evidence" value="ECO:0007669"/>
    <property type="project" value="TreeGrafter"/>
</dbReference>
<dbReference type="GO" id="GO:0004590">
    <property type="term" value="F:orotidine-5'-phosphate decarboxylase activity"/>
    <property type="evidence" value="ECO:0007669"/>
    <property type="project" value="UniProtKB-UniRule"/>
</dbReference>
<dbReference type="GO" id="GO:0006207">
    <property type="term" value="P:'de novo' pyrimidine nucleobase biosynthetic process"/>
    <property type="evidence" value="ECO:0007669"/>
    <property type="project" value="InterPro"/>
</dbReference>
<dbReference type="GO" id="GO:0044205">
    <property type="term" value="P:'de novo' UMP biosynthetic process"/>
    <property type="evidence" value="ECO:0007669"/>
    <property type="project" value="UniProtKB-UniRule"/>
</dbReference>
<dbReference type="CDD" id="cd04725">
    <property type="entry name" value="OMP_decarboxylase_like"/>
    <property type="match status" value="1"/>
</dbReference>
<dbReference type="FunFam" id="3.20.20.70:FF:000015">
    <property type="entry name" value="Orotidine 5'-phosphate decarboxylase"/>
    <property type="match status" value="1"/>
</dbReference>
<dbReference type="Gene3D" id="3.20.20.70">
    <property type="entry name" value="Aldolase class I"/>
    <property type="match status" value="1"/>
</dbReference>
<dbReference type="HAMAP" id="MF_01200_B">
    <property type="entry name" value="OMPdecase_type1_B"/>
    <property type="match status" value="1"/>
</dbReference>
<dbReference type="InterPro" id="IPR013785">
    <property type="entry name" value="Aldolase_TIM"/>
</dbReference>
<dbReference type="InterPro" id="IPR014732">
    <property type="entry name" value="OMPdecase"/>
</dbReference>
<dbReference type="InterPro" id="IPR018089">
    <property type="entry name" value="OMPdecase_AS"/>
</dbReference>
<dbReference type="InterPro" id="IPR047596">
    <property type="entry name" value="OMPdecase_bac"/>
</dbReference>
<dbReference type="InterPro" id="IPR001754">
    <property type="entry name" value="OMPdeCOase_dom"/>
</dbReference>
<dbReference type="InterPro" id="IPR011060">
    <property type="entry name" value="RibuloseP-bd_barrel"/>
</dbReference>
<dbReference type="NCBIfam" id="NF001273">
    <property type="entry name" value="PRK00230.1"/>
    <property type="match status" value="1"/>
</dbReference>
<dbReference type="NCBIfam" id="TIGR01740">
    <property type="entry name" value="pyrF"/>
    <property type="match status" value="1"/>
</dbReference>
<dbReference type="PANTHER" id="PTHR32119">
    <property type="entry name" value="OROTIDINE 5'-PHOSPHATE DECARBOXYLASE"/>
    <property type="match status" value="1"/>
</dbReference>
<dbReference type="PANTHER" id="PTHR32119:SF2">
    <property type="entry name" value="OROTIDINE 5'-PHOSPHATE DECARBOXYLASE"/>
    <property type="match status" value="1"/>
</dbReference>
<dbReference type="Pfam" id="PF00215">
    <property type="entry name" value="OMPdecase"/>
    <property type="match status" value="1"/>
</dbReference>
<dbReference type="SMART" id="SM00934">
    <property type="entry name" value="OMPdecase"/>
    <property type="match status" value="1"/>
</dbReference>
<dbReference type="SUPFAM" id="SSF51366">
    <property type="entry name" value="Ribulose-phoshate binding barrel"/>
    <property type="match status" value="1"/>
</dbReference>
<dbReference type="PROSITE" id="PS00156">
    <property type="entry name" value="OMPDECASE"/>
    <property type="match status" value="1"/>
</dbReference>
<feature type="chain" id="PRO_1000065950" description="Orotidine 5'-phosphate decarboxylase">
    <location>
        <begin position="1"/>
        <end position="230"/>
    </location>
</feature>
<feature type="active site" description="Proton donor" evidence="1">
    <location>
        <position position="63"/>
    </location>
</feature>
<feature type="binding site" evidence="1">
    <location>
        <position position="11"/>
    </location>
    <ligand>
        <name>substrate</name>
    </ligand>
</feature>
<feature type="binding site" evidence="1">
    <location>
        <position position="34"/>
    </location>
    <ligand>
        <name>substrate</name>
    </ligand>
</feature>
<feature type="binding site" evidence="1">
    <location>
        <begin position="61"/>
        <end position="70"/>
    </location>
    <ligand>
        <name>substrate</name>
    </ligand>
</feature>
<feature type="binding site" evidence="1">
    <location>
        <position position="117"/>
    </location>
    <ligand>
        <name>substrate</name>
    </ligand>
</feature>
<feature type="binding site" evidence="1">
    <location>
        <position position="179"/>
    </location>
    <ligand>
        <name>substrate</name>
    </ligand>
</feature>
<feature type="binding site" evidence="1">
    <location>
        <position position="188"/>
    </location>
    <ligand>
        <name>substrate</name>
    </ligand>
</feature>
<feature type="binding site" evidence="1">
    <location>
        <position position="208"/>
    </location>
    <ligand>
        <name>substrate</name>
    </ligand>
</feature>
<feature type="binding site" evidence="1">
    <location>
        <position position="209"/>
    </location>
    <ligand>
        <name>substrate</name>
    </ligand>
</feature>
<protein>
    <recommendedName>
        <fullName evidence="1">Orotidine 5'-phosphate decarboxylase</fullName>
        <ecNumber evidence="1">4.1.1.23</ecNumber>
    </recommendedName>
    <alternativeName>
        <fullName evidence="1">OMP decarboxylase</fullName>
        <shortName evidence="1">OMPDCase</shortName>
        <shortName evidence="1">OMPdecase</shortName>
    </alternativeName>
</protein>
<evidence type="ECO:0000255" key="1">
    <source>
        <dbReference type="HAMAP-Rule" id="MF_01200"/>
    </source>
</evidence>